<sequence length="586" mass="62571">MRKTKIVCTIGPASESPELLEQLIEAGMNVARLNFSHGNHAEHKARIDSIRKVAREKGKVVGILLDTKGPEIRTHSMMNGKLELVTGQKIDISMTQVEGNNDVFSVSYDKLIEDVNEGSVILLDDGLIQLEVTGKDVARGLIHTLIINSGSLSNNKGVNIPGVSVQLPGMTEKDAEDILFGIREGVDFIAASFVRRASDVMEIRALLENNNGSNLQIIPKIENQEGVDNIDEILNVSDGLMVARGDLGVEIPPEEVPLVQKNLIEKCNQAGKPVITATQMLDSMQRNPRPTRAEASDVANAIFDGTDAIMLSGETAAGIYPVESVQTMDRIALTTEAAIDYRSVVSTRRREKHGNMTEAIGQAAAYTAINLKVKAVLAPTESGHTAKMIAKYRPGCPVIAVTSSEMCSRKLSLIWGVYPIVGKKASSIDEILQESVEESVKHQYVGHGDVVIITAGVPVGEAGTTNLMKIHVIGDLLARGQGIGKDVAYGRTVVAKNAAEALAYDTEGAILVTNASDRDMMPAIEKCAGLITEEGGLTSHGAIVGLSLGIPIIVGVENATELIQHGKEITMDAESGVIYNGHASVL</sequence>
<name>KPYK_SPOPS</name>
<gene>
    <name type="primary">pyk</name>
</gene>
<protein>
    <recommendedName>
        <fullName>Pyruvate kinase</fullName>
        <shortName>PK</shortName>
        <ecNumber>2.7.1.40</ecNumber>
    </recommendedName>
</protein>
<accession>P51182</accession>
<organism>
    <name type="scientific">Sporosarcina psychrophila</name>
    <name type="common">Bacillus psychrophilus</name>
    <dbReference type="NCBI Taxonomy" id="1476"/>
    <lineage>
        <taxon>Bacteria</taxon>
        <taxon>Bacillati</taxon>
        <taxon>Bacillota</taxon>
        <taxon>Bacilli</taxon>
        <taxon>Bacillales</taxon>
        <taxon>Caryophanaceae</taxon>
        <taxon>Sporosarcina</taxon>
    </lineage>
</organism>
<evidence type="ECO:0000250" key="1"/>
<evidence type="ECO:0000250" key="2">
    <source>
        <dbReference type="UniProtKB" id="P14618"/>
    </source>
</evidence>
<evidence type="ECO:0000305" key="3"/>
<proteinExistence type="inferred from homology"/>
<keyword id="KW-0067">ATP-binding</keyword>
<keyword id="KW-0324">Glycolysis</keyword>
<keyword id="KW-0418">Kinase</keyword>
<keyword id="KW-0460">Magnesium</keyword>
<keyword id="KW-0479">Metal-binding</keyword>
<keyword id="KW-0547">Nucleotide-binding</keyword>
<keyword id="KW-0630">Potassium</keyword>
<keyword id="KW-0670">Pyruvate</keyword>
<keyword id="KW-0808">Transferase</keyword>
<comment type="catalytic activity">
    <reaction>
        <text>pyruvate + ATP = phosphoenolpyruvate + ADP + H(+)</text>
        <dbReference type="Rhea" id="RHEA:18157"/>
        <dbReference type="ChEBI" id="CHEBI:15361"/>
        <dbReference type="ChEBI" id="CHEBI:15378"/>
        <dbReference type="ChEBI" id="CHEBI:30616"/>
        <dbReference type="ChEBI" id="CHEBI:58702"/>
        <dbReference type="ChEBI" id="CHEBI:456216"/>
        <dbReference type="EC" id="2.7.1.40"/>
    </reaction>
</comment>
<comment type="cofactor">
    <cofactor>
        <name>Mg(2+)</name>
        <dbReference type="ChEBI" id="CHEBI:18420"/>
    </cofactor>
</comment>
<comment type="cofactor">
    <cofactor>
        <name>K(+)</name>
        <dbReference type="ChEBI" id="CHEBI:29103"/>
    </cofactor>
</comment>
<comment type="pathway">
    <text>Carbohydrate degradation; glycolysis; pyruvate from D-glyceraldehyde 3-phosphate: step 5/5.</text>
</comment>
<comment type="subunit">
    <text evidence="1">Homotetramer.</text>
</comment>
<comment type="similarity">
    <text evidence="3">Belongs to the pyruvate kinase family.</text>
</comment>
<comment type="similarity">
    <text evidence="3">In the C-terminal section; belongs to the PEP-utilizing enzyme family.</text>
</comment>
<reference key="1">
    <citation type="journal article" date="1995" name="Biosci. Biotechnol. Biochem.">
        <title>Molecular cloning of the genes for pyruvate kinase of two bacilli, Bacillus psychrophilus and Bacillus licheniformis, and comparison of the properties of the enzymes produced in Escherichia coli.</title>
        <authorList>
            <person name="Tanaka K."/>
            <person name="Sakai H."/>
            <person name="Ohta T."/>
            <person name="Matsuzawa H."/>
        </authorList>
    </citation>
    <scope>NUCLEOTIDE SEQUENCE [GENOMIC DNA]</scope>
</reference>
<feature type="chain" id="PRO_0000112054" description="Pyruvate kinase">
    <location>
        <begin position="1"/>
        <end position="586"/>
    </location>
</feature>
<feature type="binding site" evidence="1">
    <location>
        <position position="32"/>
    </location>
    <ligand>
        <name>substrate</name>
    </ligand>
</feature>
<feature type="binding site" evidence="2">
    <location>
        <begin position="34"/>
        <end position="37"/>
    </location>
    <ligand>
        <name>ATP</name>
        <dbReference type="ChEBI" id="CHEBI:30616"/>
    </ligand>
</feature>
<feature type="binding site" evidence="1">
    <location>
        <position position="34"/>
    </location>
    <ligand>
        <name>K(+)</name>
        <dbReference type="ChEBI" id="CHEBI:29103"/>
    </ligand>
</feature>
<feature type="binding site" evidence="1">
    <location>
        <position position="36"/>
    </location>
    <ligand>
        <name>K(+)</name>
        <dbReference type="ChEBI" id="CHEBI:29103"/>
    </ligand>
</feature>
<feature type="binding site" evidence="1">
    <location>
        <position position="66"/>
    </location>
    <ligand>
        <name>K(+)</name>
        <dbReference type="ChEBI" id="CHEBI:29103"/>
    </ligand>
</feature>
<feature type="binding site" evidence="1">
    <location>
        <position position="67"/>
    </location>
    <ligand>
        <name>K(+)</name>
        <dbReference type="ChEBI" id="CHEBI:29103"/>
    </ligand>
</feature>
<feature type="binding site" evidence="2">
    <location>
        <position position="73"/>
    </location>
    <ligand>
        <name>ATP</name>
        <dbReference type="ChEBI" id="CHEBI:30616"/>
    </ligand>
</feature>
<feature type="binding site" evidence="2">
    <location>
        <position position="156"/>
    </location>
    <ligand>
        <name>ATP</name>
        <dbReference type="ChEBI" id="CHEBI:30616"/>
    </ligand>
</feature>
<feature type="binding site" evidence="1">
    <location>
        <position position="222"/>
    </location>
    <ligand>
        <name>Mg(2+)</name>
        <dbReference type="ChEBI" id="CHEBI:18420"/>
    </ligand>
</feature>
<feature type="binding site" evidence="1">
    <location>
        <position position="245"/>
    </location>
    <ligand>
        <name>substrate</name>
    </ligand>
</feature>
<feature type="binding site" evidence="1">
    <location>
        <position position="246"/>
    </location>
    <ligand>
        <name>Mg(2+)</name>
        <dbReference type="ChEBI" id="CHEBI:18420"/>
    </ligand>
</feature>
<feature type="binding site" evidence="1">
    <location>
        <position position="246"/>
    </location>
    <ligand>
        <name>substrate</name>
    </ligand>
</feature>
<feature type="binding site" evidence="1">
    <location>
        <position position="278"/>
    </location>
    <ligand>
        <name>substrate</name>
    </ligand>
</feature>
<feature type="site" description="Transition state stabilizer" evidence="1">
    <location>
        <position position="220"/>
    </location>
</feature>
<dbReference type="EC" id="2.7.1.40"/>
<dbReference type="EMBL" id="D31954">
    <property type="protein sequence ID" value="BAA06725.1"/>
    <property type="molecule type" value="Genomic_DNA"/>
</dbReference>
<dbReference type="PIR" id="JC4219">
    <property type="entry name" value="JC4219"/>
</dbReference>
<dbReference type="RefSeq" id="WP_067207646.1">
    <property type="nucleotide sequence ID" value="NZ_CP014616.1"/>
</dbReference>
<dbReference type="SMR" id="P51182"/>
<dbReference type="STRING" id="1476.AZE41_07700"/>
<dbReference type="KEGG" id="spsy:AZE41_07700"/>
<dbReference type="OrthoDB" id="9812123at2"/>
<dbReference type="BRENDA" id="2.7.1.40">
    <property type="organism ID" value="685"/>
</dbReference>
<dbReference type="UniPathway" id="UPA00109">
    <property type="reaction ID" value="UER00188"/>
</dbReference>
<dbReference type="GO" id="GO:0005524">
    <property type="term" value="F:ATP binding"/>
    <property type="evidence" value="ECO:0007669"/>
    <property type="project" value="UniProtKB-KW"/>
</dbReference>
<dbReference type="GO" id="GO:0016301">
    <property type="term" value="F:kinase activity"/>
    <property type="evidence" value="ECO:0007669"/>
    <property type="project" value="UniProtKB-KW"/>
</dbReference>
<dbReference type="GO" id="GO:0000287">
    <property type="term" value="F:magnesium ion binding"/>
    <property type="evidence" value="ECO:0007669"/>
    <property type="project" value="InterPro"/>
</dbReference>
<dbReference type="GO" id="GO:0030955">
    <property type="term" value="F:potassium ion binding"/>
    <property type="evidence" value="ECO:0007669"/>
    <property type="project" value="InterPro"/>
</dbReference>
<dbReference type="GO" id="GO:0004743">
    <property type="term" value="F:pyruvate kinase activity"/>
    <property type="evidence" value="ECO:0007669"/>
    <property type="project" value="UniProtKB-EC"/>
</dbReference>
<dbReference type="FunFam" id="2.40.33.10:FF:000001">
    <property type="entry name" value="Pyruvate kinase"/>
    <property type="match status" value="1"/>
</dbReference>
<dbReference type="FunFam" id="3.20.20.60:FF:000001">
    <property type="entry name" value="Pyruvate kinase"/>
    <property type="match status" value="1"/>
</dbReference>
<dbReference type="FunFam" id="3.50.30.10:FF:000004">
    <property type="entry name" value="Pyruvate kinase"/>
    <property type="match status" value="1"/>
</dbReference>
<dbReference type="Gene3D" id="3.20.20.60">
    <property type="entry name" value="Phosphoenolpyruvate-binding domains"/>
    <property type="match status" value="1"/>
</dbReference>
<dbReference type="Gene3D" id="3.50.30.10">
    <property type="entry name" value="Phosphohistidine domain"/>
    <property type="match status" value="1"/>
</dbReference>
<dbReference type="Gene3D" id="2.40.33.10">
    <property type="entry name" value="PK beta-barrel domain-like"/>
    <property type="match status" value="1"/>
</dbReference>
<dbReference type="Gene3D" id="3.40.1380.20">
    <property type="entry name" value="Pyruvate kinase, C-terminal domain"/>
    <property type="match status" value="1"/>
</dbReference>
<dbReference type="InterPro" id="IPR008279">
    <property type="entry name" value="PEP-util_enz_mobile_dom"/>
</dbReference>
<dbReference type="InterPro" id="IPR036637">
    <property type="entry name" value="Phosphohistidine_dom_sf"/>
</dbReference>
<dbReference type="InterPro" id="IPR001697">
    <property type="entry name" value="Pyr_Knase"/>
</dbReference>
<dbReference type="InterPro" id="IPR015813">
    <property type="entry name" value="Pyrv/PenolPyrv_kinase-like_dom"/>
</dbReference>
<dbReference type="InterPro" id="IPR040442">
    <property type="entry name" value="Pyrv_kinase-like_dom_sf"/>
</dbReference>
<dbReference type="InterPro" id="IPR011037">
    <property type="entry name" value="Pyrv_Knase-like_insert_dom_sf"/>
</dbReference>
<dbReference type="InterPro" id="IPR018209">
    <property type="entry name" value="Pyrv_Knase_AS"/>
</dbReference>
<dbReference type="InterPro" id="IPR015793">
    <property type="entry name" value="Pyrv_Knase_brl"/>
</dbReference>
<dbReference type="InterPro" id="IPR015795">
    <property type="entry name" value="Pyrv_Knase_C"/>
</dbReference>
<dbReference type="InterPro" id="IPR036918">
    <property type="entry name" value="Pyrv_Knase_C_sf"/>
</dbReference>
<dbReference type="InterPro" id="IPR015806">
    <property type="entry name" value="Pyrv_Knase_insert_dom_sf"/>
</dbReference>
<dbReference type="NCBIfam" id="NF004491">
    <property type="entry name" value="PRK05826.1"/>
    <property type="match status" value="1"/>
</dbReference>
<dbReference type="NCBIfam" id="NF004978">
    <property type="entry name" value="PRK06354.1"/>
    <property type="match status" value="1"/>
</dbReference>
<dbReference type="NCBIfam" id="TIGR01064">
    <property type="entry name" value="pyruv_kin"/>
    <property type="match status" value="1"/>
</dbReference>
<dbReference type="PANTHER" id="PTHR11817">
    <property type="entry name" value="PYRUVATE KINASE"/>
    <property type="match status" value="1"/>
</dbReference>
<dbReference type="Pfam" id="PF00391">
    <property type="entry name" value="PEP-utilizers"/>
    <property type="match status" value="1"/>
</dbReference>
<dbReference type="Pfam" id="PF00224">
    <property type="entry name" value="PK"/>
    <property type="match status" value="1"/>
</dbReference>
<dbReference type="Pfam" id="PF02887">
    <property type="entry name" value="PK_C"/>
    <property type="match status" value="1"/>
</dbReference>
<dbReference type="PRINTS" id="PR01050">
    <property type="entry name" value="PYRUVTKNASE"/>
</dbReference>
<dbReference type="SUPFAM" id="SSF51621">
    <property type="entry name" value="Phosphoenolpyruvate/pyruvate domain"/>
    <property type="match status" value="1"/>
</dbReference>
<dbReference type="SUPFAM" id="SSF52009">
    <property type="entry name" value="Phosphohistidine domain"/>
    <property type="match status" value="1"/>
</dbReference>
<dbReference type="SUPFAM" id="SSF50800">
    <property type="entry name" value="PK beta-barrel domain-like"/>
    <property type="match status" value="1"/>
</dbReference>
<dbReference type="SUPFAM" id="SSF52935">
    <property type="entry name" value="PK C-terminal domain-like"/>
    <property type="match status" value="1"/>
</dbReference>
<dbReference type="PROSITE" id="PS00110">
    <property type="entry name" value="PYRUVATE_KINASE"/>
    <property type="match status" value="1"/>
</dbReference>